<sequence>MSARYAEIGVTTNFSFLEGGSHPQDYVHEASRLGLDAIGIADRNTLAGVVRAFSEFDNEELIHKPKLLIGTRLCFADGTPDLLAYPTDRAAYGRLCRLLSAGKLRAGKGECHLTFADLEAFIHERSPSIHELATVIHPPSASINQPSASIHQFPTPSWPGLTRPSTPTSKVVLVSVDARVKPGHDGGKRVADNSQILLVVMPSYRFQTKTIAIALERLTALNADAVWLGLTPYYRGDDKRRLARLRRIAAVARVPCIATNDVLYHHPRRRALQDVLTCVREKTSIDKAGRRLEGNAERHLKPAAEMARLFRHDPEAIAETLRFADRISFTLDELKYHYPDEPVPPGKTAQAHLQDLTEQGIKQYFPNGISDRLRATIAKELAIIERRGYAHYFLTVHDIVRYARSQDILCQGRGSAANSAVCYVLGITCVDPTEIDLLFERFVSEERDEPPDIDVDFEHSRREEVMQYIYRRYGRHRAAIVATVIHYRPRSAIRDVGKALGLSEDVTAALADTVWGSWGKGLNEMQVRQAGLDPHNPMIGRAVELATELIGFPRHLSQHVGGYVLTQDRLDSYVPIGNAAMADRTFIEWDKDDIDAVKMMKVDVLALGMLTCIRKGFHLIAQHKGVRFQLSDIKSEDDNAVYKMLQRGESIGVFQVESRAQMNMLPRLKPRCFYDLVIEVAIVRPGPIQGDMVHPYLRRRNGQEPVVYPSPSGEAGDKNELRQILGKTLGVPLFQEQAMRIAIEAAHFTPDEANQLRRAMATFRNVGTIGKFEAKMIGNLVKRGYDATFAKNCFEQIKGFGSYGFPESHAASFAKLVYVSAWMKCEHPDAFCCALLNSQPMGFYAPAQIVGDARSNGVEVRPVDVSFSEGQCTLEERCGRHHAVRLGFRMIDGFRWADPDEERVQLEAGEPPSDDWAARIVAARARGAFTSLEQFARITALPKRALILLADADAFRSLGLDRRAALWAVRRLPDDVPLPLFEAASAREQEDERAAPLPAMPMAEHVVADYQTVRLSLKGHPMEFLRALFAAERVVTCREVSRSEQRASGCWLRCAGVVLVRQRPGSANGVIFMTIEDETGIANIVVWPAVMEKYRKEVMGARLVLVEGKVQASAEGVVHLVAERLIDRSAEMGRLAEGLVRPALPDGADLYEPLTSEKYNYEALNGDRRDTPDAPAQRHRHPRDVRILPPSRDFH</sequence>
<feature type="chain" id="PRO_0000103398" description="Error-prone DNA polymerase">
    <location>
        <begin position="1"/>
        <end position="1195"/>
    </location>
</feature>
<feature type="region of interest" description="Disordered" evidence="2">
    <location>
        <begin position="1163"/>
        <end position="1195"/>
    </location>
</feature>
<protein>
    <recommendedName>
        <fullName evidence="1">Error-prone DNA polymerase</fullName>
        <ecNumber evidence="1">2.7.7.7</ecNumber>
    </recommendedName>
</protein>
<reference key="1">
    <citation type="journal article" date="2004" name="Nat. Biotechnol.">
        <title>Complete genome sequence of the metabolically versatile photosynthetic bacterium Rhodopseudomonas palustris.</title>
        <authorList>
            <person name="Larimer F.W."/>
            <person name="Chain P."/>
            <person name="Hauser L."/>
            <person name="Lamerdin J.E."/>
            <person name="Malfatti S."/>
            <person name="Do L."/>
            <person name="Land M.L."/>
            <person name="Pelletier D.A."/>
            <person name="Beatty J.T."/>
            <person name="Lang A.S."/>
            <person name="Tabita F.R."/>
            <person name="Gibson J.L."/>
            <person name="Hanson T.E."/>
            <person name="Bobst C."/>
            <person name="Torres y Torres J.L."/>
            <person name="Peres C."/>
            <person name="Harrison F.H."/>
            <person name="Gibson J."/>
            <person name="Harwood C.S."/>
        </authorList>
    </citation>
    <scope>NUCLEOTIDE SEQUENCE [LARGE SCALE GENOMIC DNA]</scope>
    <source>
        <strain>ATCC BAA-98 / CGA009</strain>
    </source>
</reference>
<comment type="function">
    <text evidence="1">DNA polymerase involved in damage-induced mutagenesis and translesion synthesis (TLS). It is not the major replicative DNA polymerase.</text>
</comment>
<comment type="catalytic activity">
    <reaction evidence="1">
        <text>DNA(n) + a 2'-deoxyribonucleoside 5'-triphosphate = DNA(n+1) + diphosphate</text>
        <dbReference type="Rhea" id="RHEA:22508"/>
        <dbReference type="Rhea" id="RHEA-COMP:17339"/>
        <dbReference type="Rhea" id="RHEA-COMP:17340"/>
        <dbReference type="ChEBI" id="CHEBI:33019"/>
        <dbReference type="ChEBI" id="CHEBI:61560"/>
        <dbReference type="ChEBI" id="CHEBI:173112"/>
        <dbReference type="EC" id="2.7.7.7"/>
    </reaction>
</comment>
<comment type="subcellular location">
    <subcellularLocation>
        <location evidence="1">Cytoplasm</location>
    </subcellularLocation>
</comment>
<comment type="similarity">
    <text evidence="1">Belongs to the DNA polymerase type-C family. DnaE2 subfamily.</text>
</comment>
<name>DNAE2_RHOPA</name>
<dbReference type="EC" id="2.7.7.7" evidence="1"/>
<dbReference type="EMBL" id="BX572598">
    <property type="protein sequence ID" value="CAE27244.1"/>
    <property type="molecule type" value="Genomic_DNA"/>
</dbReference>
<dbReference type="RefSeq" id="WP_011157309.1">
    <property type="nucleotide sequence ID" value="NZ_CP116810.1"/>
</dbReference>
<dbReference type="SMR" id="Q6N8V0"/>
<dbReference type="STRING" id="258594.RPA1803"/>
<dbReference type="GeneID" id="66892839"/>
<dbReference type="eggNOG" id="COG0587">
    <property type="taxonomic scope" value="Bacteria"/>
</dbReference>
<dbReference type="HOGENOM" id="CLU_001600_4_0_5"/>
<dbReference type="PhylomeDB" id="Q6N8V0"/>
<dbReference type="GO" id="GO:0005737">
    <property type="term" value="C:cytoplasm"/>
    <property type="evidence" value="ECO:0007669"/>
    <property type="project" value="UniProtKB-SubCell"/>
</dbReference>
<dbReference type="GO" id="GO:0008408">
    <property type="term" value="F:3'-5' exonuclease activity"/>
    <property type="evidence" value="ECO:0007669"/>
    <property type="project" value="InterPro"/>
</dbReference>
<dbReference type="GO" id="GO:0003887">
    <property type="term" value="F:DNA-directed DNA polymerase activity"/>
    <property type="evidence" value="ECO:0007669"/>
    <property type="project" value="UniProtKB-UniRule"/>
</dbReference>
<dbReference type="GO" id="GO:0003676">
    <property type="term" value="F:nucleic acid binding"/>
    <property type="evidence" value="ECO:0007669"/>
    <property type="project" value="InterPro"/>
</dbReference>
<dbReference type="GO" id="GO:0006281">
    <property type="term" value="P:DNA repair"/>
    <property type="evidence" value="ECO:0007669"/>
    <property type="project" value="UniProtKB-UniRule"/>
</dbReference>
<dbReference type="GO" id="GO:0006260">
    <property type="term" value="P:DNA replication"/>
    <property type="evidence" value="ECO:0007669"/>
    <property type="project" value="UniProtKB-KW"/>
</dbReference>
<dbReference type="CDD" id="cd04485">
    <property type="entry name" value="DnaE_OBF"/>
    <property type="match status" value="1"/>
</dbReference>
<dbReference type="CDD" id="cd07434">
    <property type="entry name" value="PHP_PolIIIA_DnaE2"/>
    <property type="match status" value="1"/>
</dbReference>
<dbReference type="Gene3D" id="3.20.20.140">
    <property type="entry name" value="Metal-dependent hydrolases"/>
    <property type="match status" value="1"/>
</dbReference>
<dbReference type="HAMAP" id="MF_01902">
    <property type="entry name" value="DNApol_error_prone"/>
    <property type="match status" value="1"/>
</dbReference>
<dbReference type="InterPro" id="IPR011708">
    <property type="entry name" value="DNA_pol3_alpha_NTPase_dom"/>
</dbReference>
<dbReference type="InterPro" id="IPR040982">
    <property type="entry name" value="DNA_pol3_finger"/>
</dbReference>
<dbReference type="InterPro" id="IPR023073">
    <property type="entry name" value="DnaE2"/>
</dbReference>
<dbReference type="InterPro" id="IPR004805">
    <property type="entry name" value="DnaE2/DnaE/PolC"/>
</dbReference>
<dbReference type="InterPro" id="IPR029460">
    <property type="entry name" value="DNAPol_HHH"/>
</dbReference>
<dbReference type="InterPro" id="IPR004365">
    <property type="entry name" value="NA-bd_OB_tRNA"/>
</dbReference>
<dbReference type="InterPro" id="IPR004013">
    <property type="entry name" value="PHP_dom"/>
</dbReference>
<dbReference type="InterPro" id="IPR003141">
    <property type="entry name" value="Pol/His_phosphatase_N"/>
</dbReference>
<dbReference type="NCBIfam" id="TIGR00594">
    <property type="entry name" value="polc"/>
    <property type="match status" value="1"/>
</dbReference>
<dbReference type="NCBIfam" id="NF004225">
    <property type="entry name" value="PRK05672.1"/>
    <property type="match status" value="1"/>
</dbReference>
<dbReference type="PANTHER" id="PTHR32294">
    <property type="entry name" value="DNA POLYMERASE III SUBUNIT ALPHA"/>
    <property type="match status" value="1"/>
</dbReference>
<dbReference type="PANTHER" id="PTHR32294:SF4">
    <property type="entry name" value="ERROR-PRONE DNA POLYMERASE"/>
    <property type="match status" value="1"/>
</dbReference>
<dbReference type="Pfam" id="PF07733">
    <property type="entry name" value="DNA_pol3_alpha"/>
    <property type="match status" value="1"/>
</dbReference>
<dbReference type="Pfam" id="PF17657">
    <property type="entry name" value="DNA_pol3_finger"/>
    <property type="match status" value="1"/>
</dbReference>
<dbReference type="Pfam" id="PF14579">
    <property type="entry name" value="HHH_6"/>
    <property type="match status" value="1"/>
</dbReference>
<dbReference type="Pfam" id="PF02811">
    <property type="entry name" value="PHP"/>
    <property type="match status" value="1"/>
</dbReference>
<dbReference type="Pfam" id="PF01336">
    <property type="entry name" value="tRNA_anti-codon"/>
    <property type="match status" value="1"/>
</dbReference>
<dbReference type="SMART" id="SM00481">
    <property type="entry name" value="POLIIIAc"/>
    <property type="match status" value="1"/>
</dbReference>
<organism>
    <name type="scientific">Rhodopseudomonas palustris (strain ATCC BAA-98 / CGA009)</name>
    <dbReference type="NCBI Taxonomy" id="258594"/>
    <lineage>
        <taxon>Bacteria</taxon>
        <taxon>Pseudomonadati</taxon>
        <taxon>Pseudomonadota</taxon>
        <taxon>Alphaproteobacteria</taxon>
        <taxon>Hyphomicrobiales</taxon>
        <taxon>Nitrobacteraceae</taxon>
        <taxon>Rhodopseudomonas</taxon>
    </lineage>
</organism>
<gene>
    <name evidence="1" type="primary">dnaE2</name>
    <name type="ordered locus">RPA1803</name>
</gene>
<proteinExistence type="inferred from homology"/>
<evidence type="ECO:0000255" key="1">
    <source>
        <dbReference type="HAMAP-Rule" id="MF_01902"/>
    </source>
</evidence>
<evidence type="ECO:0000256" key="2">
    <source>
        <dbReference type="SAM" id="MobiDB-lite"/>
    </source>
</evidence>
<keyword id="KW-0963">Cytoplasm</keyword>
<keyword id="KW-0227">DNA damage</keyword>
<keyword id="KW-0234">DNA repair</keyword>
<keyword id="KW-0235">DNA replication</keyword>
<keyword id="KW-0239">DNA-directed DNA polymerase</keyword>
<keyword id="KW-0548">Nucleotidyltransferase</keyword>
<keyword id="KW-0808">Transferase</keyword>
<accession>Q6N8V0</accession>